<name>PLM5_PLAVS</name>
<protein>
    <recommendedName>
        <fullName evidence="10">Plasmepsin V</fullName>
        <shortName evidence="10">PvPMV</shortName>
        <ecNumber evidence="7 8 9">3.4.23.-</ecNumber>
    </recommendedName>
    <alternativeName>
        <fullName evidence="11">Plasmepsin 5</fullName>
    </alternativeName>
</protein>
<organism evidence="13">
    <name type="scientific">Plasmodium vivax (strain Salvador I)</name>
    <dbReference type="NCBI Taxonomy" id="126793"/>
    <lineage>
        <taxon>Eukaryota</taxon>
        <taxon>Sar</taxon>
        <taxon>Alveolata</taxon>
        <taxon>Apicomplexa</taxon>
        <taxon>Aconoidasida</taxon>
        <taxon>Haemosporida</taxon>
        <taxon>Plasmodiidae</taxon>
        <taxon>Plasmodium</taxon>
        <taxon>Plasmodium (Plasmodium)</taxon>
    </lineage>
</organism>
<feature type="signal peptide" evidence="3">
    <location>
        <begin position="1"/>
        <end position="34"/>
    </location>
</feature>
<feature type="chain" id="PRO_5002684980" description="Plasmepsin V" evidence="3">
    <location>
        <begin position="35"/>
        <end position="536"/>
    </location>
</feature>
<feature type="topological domain" description="Lumenal" evidence="1">
    <location>
        <begin position="35"/>
        <end position="492"/>
    </location>
</feature>
<feature type="transmembrane region" description="Helical" evidence="3">
    <location>
        <begin position="493"/>
        <end position="513"/>
    </location>
</feature>
<feature type="topological domain" description="Cytoplasmic" evidence="1">
    <location>
        <begin position="514"/>
        <end position="536"/>
    </location>
</feature>
<feature type="domain" description="Peptidase A1" evidence="4">
    <location>
        <begin position="62"/>
        <end position="462"/>
    </location>
</feature>
<feature type="region of interest" description="Disordered" evidence="6">
    <location>
        <begin position="244"/>
        <end position="264"/>
    </location>
</feature>
<feature type="compositionally biased region" description="Low complexity" evidence="6">
    <location>
        <begin position="244"/>
        <end position="258"/>
    </location>
</feature>
<feature type="active site" evidence="4">
    <location>
        <position position="80"/>
    </location>
</feature>
<feature type="active site" evidence="4">
    <location>
        <position position="313"/>
    </location>
</feature>
<feature type="disulfide bond" evidence="8 9 14 15">
    <location>
        <begin position="90"/>
        <end position="172"/>
    </location>
</feature>
<feature type="disulfide bond" evidence="8 9 14 15">
    <location>
        <begin position="93"/>
        <end position="96"/>
    </location>
</feature>
<feature type="disulfide bond" evidence="8 9 14 15">
    <location>
        <begin position="117"/>
        <end position="128"/>
    </location>
</feature>
<feature type="disulfide bond" evidence="8 9 14 15">
    <location>
        <begin position="122"/>
        <end position="133"/>
    </location>
</feature>
<feature type="disulfide bond" evidence="8 9 14 15">
    <location>
        <begin position="220"/>
        <end position="466"/>
    </location>
</feature>
<feature type="disulfide bond" evidence="8 9 14 15">
    <location>
        <begin position="337"/>
        <end position="382"/>
    </location>
</feature>
<feature type="disulfide bond" evidence="8 9 14 15">
    <location>
        <begin position="391"/>
        <end position="427"/>
    </location>
</feature>
<feature type="mutagenesis site" description="Loss of catalytic activity; when associated with A-313." evidence="7">
    <original>D</original>
    <variation>A</variation>
    <location>
        <position position="80"/>
    </location>
</feature>
<feature type="mutagenesis site" description="Loss of catalytic activity; when associated with A-80." evidence="7">
    <original>D</original>
    <variation>A</variation>
    <location>
        <position position="313"/>
    </location>
</feature>
<feature type="strand" evidence="16">
    <location>
        <begin position="48"/>
        <end position="55"/>
    </location>
</feature>
<feature type="turn" evidence="16">
    <location>
        <begin position="56"/>
        <end position="59"/>
    </location>
</feature>
<feature type="strand" evidence="16">
    <location>
        <begin position="60"/>
        <end position="68"/>
    </location>
</feature>
<feature type="turn" evidence="16">
    <location>
        <begin position="69"/>
        <end position="72"/>
    </location>
</feature>
<feature type="strand" evidence="16">
    <location>
        <begin position="73"/>
        <end position="80"/>
    </location>
</feature>
<feature type="strand" evidence="16">
    <location>
        <begin position="86"/>
        <end position="90"/>
    </location>
</feature>
<feature type="helix" evidence="16">
    <location>
        <begin position="106"/>
        <end position="108"/>
    </location>
</feature>
<feature type="strand" evidence="16">
    <location>
        <begin position="118"/>
        <end position="120"/>
    </location>
</feature>
<feature type="helix" evidence="16">
    <location>
        <begin position="123"/>
        <end position="125"/>
    </location>
</feature>
<feature type="strand" evidence="16">
    <location>
        <begin position="132"/>
        <end position="138"/>
    </location>
</feature>
<feature type="strand" evidence="16">
    <location>
        <begin position="144"/>
        <end position="157"/>
    </location>
</feature>
<feature type="strand" evidence="16">
    <location>
        <begin position="163"/>
        <end position="175"/>
    </location>
</feature>
<feature type="helix" evidence="16">
    <location>
        <begin position="178"/>
        <end position="182"/>
    </location>
</feature>
<feature type="strand" evidence="16">
    <location>
        <begin position="187"/>
        <end position="190"/>
    </location>
</feature>
<feature type="helix" evidence="16">
    <location>
        <begin position="202"/>
        <end position="208"/>
    </location>
</feature>
<feature type="strand" evidence="16">
    <location>
        <begin position="215"/>
        <end position="221"/>
    </location>
</feature>
<feature type="strand" evidence="16">
    <location>
        <begin position="226"/>
        <end position="232"/>
    </location>
</feature>
<feature type="helix" evidence="16">
    <location>
        <begin position="235"/>
        <end position="237"/>
    </location>
</feature>
<feature type="strand" evidence="16">
    <location>
        <begin position="277"/>
        <end position="280"/>
    </location>
</feature>
<feature type="strand" evidence="16">
    <location>
        <begin position="282"/>
        <end position="286"/>
    </location>
</feature>
<feature type="strand" evidence="16">
    <location>
        <begin position="288"/>
        <end position="296"/>
    </location>
</feature>
<feature type="strand" evidence="16">
    <location>
        <begin position="308"/>
        <end position="312"/>
    </location>
</feature>
<feature type="strand" evidence="16">
    <location>
        <begin position="317"/>
        <end position="321"/>
    </location>
</feature>
<feature type="helix" evidence="16">
    <location>
        <begin position="323"/>
        <end position="336"/>
    </location>
</feature>
<feature type="helix" evidence="16">
    <location>
        <begin position="344"/>
        <end position="358"/>
    </location>
</feature>
<feature type="helix" evidence="16">
    <location>
        <begin position="365"/>
        <end position="377"/>
    </location>
</feature>
<feature type="strand" evidence="16">
    <location>
        <begin position="382"/>
        <end position="384"/>
    </location>
</feature>
<feature type="helix" evidence="16">
    <location>
        <begin position="386"/>
        <end position="388"/>
    </location>
</feature>
<feature type="strand" evidence="16">
    <location>
        <begin position="390"/>
        <end position="393"/>
    </location>
</feature>
<feature type="strand" evidence="16">
    <location>
        <begin position="401"/>
        <end position="405"/>
    </location>
</feature>
<feature type="strand" evidence="16">
    <location>
        <begin position="410"/>
        <end position="413"/>
    </location>
</feature>
<feature type="helix" evidence="16">
    <location>
        <begin position="415"/>
        <end position="418"/>
    </location>
</feature>
<feature type="strand" evidence="16">
    <location>
        <begin position="419"/>
        <end position="422"/>
    </location>
</feature>
<feature type="strand" evidence="16">
    <location>
        <begin position="425"/>
        <end position="428"/>
    </location>
</feature>
<feature type="strand" evidence="16">
    <location>
        <begin position="430"/>
        <end position="432"/>
    </location>
</feature>
<feature type="helix" evidence="16">
    <location>
        <begin position="442"/>
        <end position="445"/>
    </location>
</feature>
<feature type="strand" evidence="16">
    <location>
        <begin position="448"/>
        <end position="453"/>
    </location>
</feature>
<feature type="turn" evidence="16">
    <location>
        <begin position="454"/>
        <end position="457"/>
    </location>
</feature>
<feature type="strand" evidence="16">
    <location>
        <begin position="458"/>
        <end position="464"/>
    </location>
</feature>
<dbReference type="EC" id="3.4.23.-" evidence="7 8 9"/>
<dbReference type="EMBL" id="AAKM01000004">
    <property type="protein sequence ID" value="EDL45906.1"/>
    <property type="molecule type" value="Genomic_DNA"/>
</dbReference>
<dbReference type="RefSeq" id="XP_001615633.1">
    <property type="nucleotide sequence ID" value="XM_001615583.1"/>
</dbReference>
<dbReference type="PDB" id="4ZL4">
    <property type="method" value="X-ray"/>
    <property type="resolution" value="2.37 A"/>
    <property type="chains" value="A/B=35-476"/>
</dbReference>
<dbReference type="PDB" id="6C4G">
    <property type="method" value="X-ray"/>
    <property type="resolution" value="2.39 A"/>
    <property type="chains" value="A=35-476"/>
</dbReference>
<dbReference type="PDB" id="8TYF">
    <property type="method" value="X-ray"/>
    <property type="resolution" value="2.59 A"/>
    <property type="chains" value="A=35-476"/>
</dbReference>
<dbReference type="PDB" id="8TYG">
    <property type="method" value="X-ray"/>
    <property type="resolution" value="1.64 A"/>
    <property type="chains" value="A=35-476"/>
</dbReference>
<dbReference type="PDBsum" id="4ZL4"/>
<dbReference type="PDBsum" id="6C4G"/>
<dbReference type="PDBsum" id="8TYF"/>
<dbReference type="PDBsum" id="8TYG"/>
<dbReference type="SMR" id="A5K302"/>
<dbReference type="STRING" id="126793.A5K302"/>
<dbReference type="MEROPS" id="A01.075"/>
<dbReference type="EnsemblProtists" id="EDL45906">
    <property type="protein sequence ID" value="EDL45906"/>
    <property type="gene ID" value="PVX_116695"/>
</dbReference>
<dbReference type="GeneID" id="5474931"/>
<dbReference type="KEGG" id="pvx:PVX_116695"/>
<dbReference type="VEuPathDB" id="PlasmoDB:PVX_116695"/>
<dbReference type="InParanoid" id="A5K302"/>
<dbReference type="OMA" id="CGVHMEN"/>
<dbReference type="PhylomeDB" id="A5K302"/>
<dbReference type="EvolutionaryTrace" id="A5K302"/>
<dbReference type="Proteomes" id="UP000008333">
    <property type="component" value="Chromosome 12"/>
</dbReference>
<dbReference type="GO" id="GO:0005789">
    <property type="term" value="C:endoplasmic reticulum membrane"/>
    <property type="evidence" value="ECO:0007669"/>
    <property type="project" value="UniProtKB-SubCell"/>
</dbReference>
<dbReference type="GO" id="GO:0004190">
    <property type="term" value="F:aspartic-type endopeptidase activity"/>
    <property type="evidence" value="ECO:0007669"/>
    <property type="project" value="UniProtKB-KW"/>
</dbReference>
<dbReference type="GO" id="GO:0006508">
    <property type="term" value="P:proteolysis"/>
    <property type="evidence" value="ECO:0007669"/>
    <property type="project" value="UniProtKB-KW"/>
</dbReference>
<dbReference type="CDD" id="cd06096">
    <property type="entry name" value="Plasmepsin_5"/>
    <property type="match status" value="1"/>
</dbReference>
<dbReference type="Gene3D" id="2.40.70.10">
    <property type="entry name" value="Acid Proteases"/>
    <property type="match status" value="2"/>
</dbReference>
<dbReference type="InterPro" id="IPR001461">
    <property type="entry name" value="Aspartic_peptidase_A1"/>
</dbReference>
<dbReference type="InterPro" id="IPR001969">
    <property type="entry name" value="Aspartic_peptidase_AS"/>
</dbReference>
<dbReference type="InterPro" id="IPR033121">
    <property type="entry name" value="PEPTIDASE_A1"/>
</dbReference>
<dbReference type="InterPro" id="IPR021109">
    <property type="entry name" value="Peptidase_aspartic_dom_sf"/>
</dbReference>
<dbReference type="InterPro" id="IPR033866">
    <property type="entry name" value="Plasmepsin_5"/>
</dbReference>
<dbReference type="InterPro" id="IPR032861">
    <property type="entry name" value="TAXi_N"/>
</dbReference>
<dbReference type="PANTHER" id="PTHR13683">
    <property type="entry name" value="ASPARTYL PROTEASES"/>
    <property type="match status" value="1"/>
</dbReference>
<dbReference type="PANTHER" id="PTHR13683:SF375">
    <property type="entry name" value="PEPTIDASE A1 DOMAIN-CONTAINING PROTEIN"/>
    <property type="match status" value="1"/>
</dbReference>
<dbReference type="Pfam" id="PF00026">
    <property type="entry name" value="Asp"/>
    <property type="match status" value="1"/>
</dbReference>
<dbReference type="Pfam" id="PF14543">
    <property type="entry name" value="TAXi_N"/>
    <property type="match status" value="1"/>
</dbReference>
<dbReference type="PRINTS" id="PR00792">
    <property type="entry name" value="PEPSIN"/>
</dbReference>
<dbReference type="SUPFAM" id="SSF50630">
    <property type="entry name" value="Acid proteases"/>
    <property type="match status" value="1"/>
</dbReference>
<dbReference type="PROSITE" id="PS00141">
    <property type="entry name" value="ASP_PROTEASE"/>
    <property type="match status" value="2"/>
</dbReference>
<dbReference type="PROSITE" id="PS51767">
    <property type="entry name" value="PEPTIDASE_A1"/>
    <property type="match status" value="1"/>
</dbReference>
<gene>
    <name evidence="10" type="primary">PMV</name>
    <name evidence="12" type="ORF">PVX_116695</name>
</gene>
<evidence type="ECO:0000250" key="1">
    <source>
        <dbReference type="UniProtKB" id="Q8I6Z5"/>
    </source>
</evidence>
<evidence type="ECO:0000250" key="2">
    <source>
        <dbReference type="UniProtKB" id="W7JPD9"/>
    </source>
</evidence>
<evidence type="ECO:0000255" key="3"/>
<evidence type="ECO:0000255" key="4">
    <source>
        <dbReference type="PROSITE-ProRule" id="PRU01103"/>
    </source>
</evidence>
<evidence type="ECO:0000255" key="5">
    <source>
        <dbReference type="RuleBase" id="RU000454"/>
    </source>
</evidence>
<evidence type="ECO:0000256" key="6">
    <source>
        <dbReference type="SAM" id="MobiDB-lite"/>
    </source>
</evidence>
<evidence type="ECO:0000269" key="7">
    <source>
    </source>
</evidence>
<evidence type="ECO:0000269" key="8">
    <source>
    </source>
</evidence>
<evidence type="ECO:0000269" key="9">
    <source>
    </source>
</evidence>
<evidence type="ECO:0000303" key="10">
    <source>
    </source>
</evidence>
<evidence type="ECO:0000305" key="11"/>
<evidence type="ECO:0000312" key="12">
    <source>
        <dbReference type="EMBL" id="EDL45906.1"/>
    </source>
</evidence>
<evidence type="ECO:0000312" key="13">
    <source>
        <dbReference type="Proteomes" id="UP000008333"/>
    </source>
</evidence>
<evidence type="ECO:0007744" key="14">
    <source>
        <dbReference type="PDB" id="4ZL4"/>
    </source>
</evidence>
<evidence type="ECO:0007744" key="15">
    <source>
        <dbReference type="PDB" id="6C4G"/>
    </source>
</evidence>
<evidence type="ECO:0007829" key="16">
    <source>
        <dbReference type="PDB" id="4ZL4"/>
    </source>
</evidence>
<sequence length="536" mass="60916">MVGASLGPPGRGSLSRLIRLVICVLTLCALSVQGRSESTEGHSKDLLYKYKLYGDIDEYAYYFLDIDIGTPEQRISLILDTGSSSLSFPCAGCKNCGVHMENPFNLNNSKTSSILYCENEECPFKLNCVKGKCEYMQSYCEGSQISGFYFSDVVSVVSYNNERVTFRKLMGCHMHEESLFLYQQATGVLGMSLSKPQGIPTFVNLLFDNAPQLKQVFTICISENGGELIAGGYDPAYIVRRGGSKSVSGQGSGPVSESLSESGEDPQVALREAEKVVWENVTRKYYYYIKVRGLDMFGTNMMSSSKGLEMLVDSGSTFTHIPEDLYNKLNYFFDILCIQDMNNAYDVNKRLKMTNESFNNPLVQFDDFRKSLKSIIAKENMCVKIVDGVQCWKYLEGLPDLFVTLSNNYKMKWQPHSYLYKKESFWCKGIEKQVNNKPILGLTFFKNRQVIFDIQKNRIGFVDANCPSHPTHTRPRTYNEYKRKDNIFLKIPFFYLYSLFVVFALSVLLSLVFYVRRLYHMEYSPLPSEGKAPADA</sequence>
<keyword id="KW-0002">3D-structure</keyword>
<keyword id="KW-0064">Aspartyl protease</keyword>
<keyword id="KW-1015">Disulfide bond</keyword>
<keyword id="KW-0256">Endoplasmic reticulum</keyword>
<keyword id="KW-0378">Hydrolase</keyword>
<keyword id="KW-0472">Membrane</keyword>
<keyword id="KW-0645">Protease</keyword>
<keyword id="KW-1185">Reference proteome</keyword>
<keyword id="KW-0732">Signal</keyword>
<keyword id="KW-0812">Transmembrane</keyword>
<keyword id="KW-1133">Transmembrane helix</keyword>
<accession>A5K302</accession>
<proteinExistence type="evidence at protein level"/>
<reference evidence="13" key="1">
    <citation type="journal article" date="2008" name="Nature">
        <title>Comparative genomics of the neglected human malaria parasite Plasmodium vivax.</title>
        <authorList>
            <person name="Carlton J.M."/>
            <person name="Adams J.H."/>
            <person name="Silva J.C."/>
            <person name="Bidwell S.L."/>
            <person name="Lorenzi H."/>
            <person name="Caler E."/>
            <person name="Crabtree J."/>
            <person name="Angiuoli S.V."/>
            <person name="Merino E.F."/>
            <person name="Amedeo P."/>
            <person name="Cheng Q."/>
            <person name="Coulson R.M.R."/>
            <person name="Crabb B.S."/>
            <person name="del Portillo H.A."/>
            <person name="Essien K."/>
            <person name="Feldblyum T.V."/>
            <person name="Fernandez-Becerra C."/>
            <person name="Gilson P.R."/>
            <person name="Gueye A.H."/>
            <person name="Guo X."/>
            <person name="Kang'a S."/>
            <person name="Kooij T.W.A."/>
            <person name="Korsinczky M."/>
            <person name="Meyer E.V.-S."/>
            <person name="Nene V."/>
            <person name="Paulsen I."/>
            <person name="White O."/>
            <person name="Ralph S.A."/>
            <person name="Ren Q."/>
            <person name="Sargeant T.J."/>
            <person name="Salzberg S.L."/>
            <person name="Stoeckert C.J."/>
            <person name="Sullivan S.A."/>
            <person name="Yamamoto M.M."/>
            <person name="Hoffman S.L."/>
            <person name="Wortman J.R."/>
            <person name="Gardner M.J."/>
            <person name="Galinski M.R."/>
            <person name="Barnwell J.W."/>
            <person name="Fraser-Liggett C.M."/>
        </authorList>
    </citation>
    <scope>NUCLEOTIDE SEQUENCE [LARGE SCALE GENOMIC DNA]</scope>
    <source>
        <strain evidence="13">Salvador I</strain>
    </source>
</reference>
<reference evidence="11" key="2">
    <citation type="journal article" date="2014" name="PLoS Biol.">
        <title>Inhibition of Plasmepsin V activity demonstrates its essential role in protein export, PfEMP1 display, and survival of malaria parasites.</title>
        <authorList>
            <person name="Sleebs B.E."/>
            <person name="Lopaticki S."/>
            <person name="Marapana D.S."/>
            <person name="O'Neill M.T."/>
            <person name="Rajasekaran P."/>
            <person name="Gazdik M."/>
            <person name="Guenther S."/>
            <person name="Whitehead L.W."/>
            <person name="Lowes K.N."/>
            <person name="Barfod L."/>
            <person name="Hviid L."/>
            <person name="Shaw P.J."/>
            <person name="Hodder A.N."/>
            <person name="Smith B.J."/>
            <person name="Cowman A.F."/>
            <person name="Boddey J.A."/>
        </authorList>
    </citation>
    <scope>FUNCTION</scope>
    <scope>CATALYTIC ACTIVITY</scope>
    <scope>SUBCELLULAR LOCATION</scope>
    <scope>MUTAGENESIS OF ASP-80 AND ASP-313</scope>
</reference>
<reference evidence="14" key="3">
    <citation type="journal article" date="2015" name="Nat. Struct. Mol. Biol.">
        <title>Structural basis for plasmepsin V inhibition that blocks export of malaria proteins to human erythrocytes.</title>
        <authorList>
            <person name="Hodder A.N."/>
            <person name="Sleebs B.E."/>
            <person name="Czabotar P.E."/>
            <person name="Gazdik M."/>
            <person name="Xu Y."/>
            <person name="O'Neill M.T."/>
            <person name="Lopaticki S."/>
            <person name="Nebl T."/>
            <person name="Triglia T."/>
            <person name="Smith B.J."/>
            <person name="Lowes K."/>
            <person name="Boddey J.A."/>
            <person name="Cowman A.F."/>
        </authorList>
    </citation>
    <scope>X-RAY CRYSTALLOGRAPHY (2.37 ANGSTROMS) OF 35-476 IN COMPLEX WITH INHIBITOR</scope>
    <scope>CATALYTIC ACTIVITY</scope>
    <scope>ACTIVITY REGULATION</scope>
    <scope>DISULFIDE BONDS</scope>
</reference>
<reference evidence="15" key="4">
    <citation type="journal article" date="2018" name="Eur. J. Med. Chem.">
        <title>Enhanced antimalarial activity of plasmepsin V inhibitors by modification of the P2 position of PEXEL peptidomimetics.</title>
        <authorList>
            <person name="Nguyen W."/>
            <person name="Hodder A.N."/>
            <person name="de Lezongard R.B."/>
            <person name="Czabotar P.E."/>
            <person name="Jarman K.E."/>
            <person name="O'Neill M.T."/>
            <person name="Thompson J.K."/>
            <person name="Jousset Sabroux H."/>
            <person name="Cowman A.F."/>
            <person name="Boddey J.A."/>
            <person name="Sleebs B.E."/>
        </authorList>
    </citation>
    <scope>X-RAY CRYSTALLOGRAPHY (2.39 ANGSTROMS) OF 35-476 IN COMPLEX WITH INHIBITOR</scope>
    <scope>CATALYTIC ACTIVITY</scope>
    <scope>ACTIVITY REGULATION</scope>
    <scope>DISULFIDE BONDS</scope>
</reference>
<comment type="function">
    <text evidence="1 2 7">During the asexual blood stage, plays an essential role in the export of several proteins into the host erythrocytes by cleaving the pentameric localization motif RxLxE/Q/D (termed Plasmodium export element (PEXEL)) located downstream of the N-terminal secretory signal sequence (PubMed:24983235). Specifically, cleaves after the leucine residue in the RxLxE/Q/D (or RxLxxE) motif of exported proteins including EMP1 (By similarity). Also, by regulating protein export, plays an essential role in gametocyte development and thus parasite transmission to the mosquito vector (By similarity).</text>
</comment>
<comment type="activity regulation">
    <text evidence="8 9">Inhibited by peptidomimetic inhibitors such as WEHI-842.</text>
</comment>
<comment type="subunit">
    <text evidence="1">Component of a complex composed of SPC25 and PMV; the interaction is mediated via the transmembrane domains. The complex interacts with the SEC61 channel-forming translocon complex and is involved in the recognition and import of PEXEL motif-containing proteins into the ER for subsequent export.</text>
</comment>
<comment type="subcellular location">
    <subcellularLocation>
        <location evidence="7">Endoplasmic reticulum membrane</location>
        <topology evidence="1">Single-pass type I membrane protein</topology>
    </subcellularLocation>
</comment>
<comment type="domain">
    <text evidence="1">The transmembrane domain is essential for localization to the endoplasmic reticulum.</text>
</comment>
<comment type="PTM">
    <text evidence="1">It is not clear if the zymogen has a cleavable propeptide (By similarity). Cleavage of the putative propeptide is dispensable for catalytic activity (By similarity).</text>
</comment>
<comment type="similarity">
    <text evidence="5">Belongs to the peptidase A1 family.</text>
</comment>
<comment type="caution">
    <text evidence="11">It is unclear if PMV is glycosylated as other members of the same enzyme family, ie. PMI and PMII, are not.</text>
</comment>